<name>F3GGT_ACTCC</name>
<keyword id="KW-0284">Flavonoid biosynthesis</keyword>
<keyword id="KW-0328">Glycosyltransferase</keyword>
<keyword id="KW-1185">Reference proteome</keyword>
<keyword id="KW-0808">Transferase</keyword>
<gene>
    <name evidence="4" type="primary">F3GGT1</name>
    <name evidence="5" type="synonym">UFGT6B</name>
    <name evidence="7" type="ORF">CEY00_Acc13879</name>
</gene>
<accession>A0A2R6QXF8</accession>
<accession>A0A3B8DWI7</accession>
<organism>
    <name type="scientific">Actinidia chinensis var. chinensis</name>
    <name type="common">Chinese soft-hair kiwi</name>
    <dbReference type="NCBI Taxonomy" id="1590841"/>
    <lineage>
        <taxon>Eukaryota</taxon>
        <taxon>Viridiplantae</taxon>
        <taxon>Streptophyta</taxon>
        <taxon>Embryophyta</taxon>
        <taxon>Tracheophyta</taxon>
        <taxon>Spermatophyta</taxon>
        <taxon>Magnoliopsida</taxon>
        <taxon>eudicotyledons</taxon>
        <taxon>Gunneridae</taxon>
        <taxon>Pentapetalae</taxon>
        <taxon>asterids</taxon>
        <taxon>Ericales</taxon>
        <taxon>Actinidiaceae</taxon>
        <taxon>Actinidia</taxon>
    </lineage>
</organism>
<dbReference type="EC" id="2.4.2.50" evidence="3"/>
<dbReference type="EMBL" id="MH817045">
    <property type="protein sequence ID" value="AYJ72754.1"/>
    <property type="molecule type" value="mRNA"/>
</dbReference>
<dbReference type="EMBL" id="NKQK01000012">
    <property type="protein sequence ID" value="PSS16444.1"/>
    <property type="status" value="ALT_SEQ"/>
    <property type="molecule type" value="Genomic_DNA"/>
</dbReference>
<dbReference type="SMR" id="A0A2R6QXF8"/>
<dbReference type="STRING" id="1590841.A0A2R6QXF8"/>
<dbReference type="InParanoid" id="A0A2R6QXF8"/>
<dbReference type="OrthoDB" id="5835829at2759"/>
<dbReference type="UniPathway" id="UPA00009"/>
<dbReference type="Proteomes" id="UP000241394">
    <property type="component" value="Chromosome LG12"/>
</dbReference>
<dbReference type="GO" id="GO:0035251">
    <property type="term" value="F:UDP-glucosyltransferase activity"/>
    <property type="evidence" value="ECO:0007669"/>
    <property type="project" value="InterPro"/>
</dbReference>
<dbReference type="GO" id="GO:0035252">
    <property type="term" value="F:UDP-xylosyltransferase activity"/>
    <property type="evidence" value="ECO:0000314"/>
    <property type="project" value="UniProtKB"/>
</dbReference>
<dbReference type="GO" id="GO:0009718">
    <property type="term" value="P:anthocyanin-containing compound biosynthetic process"/>
    <property type="evidence" value="ECO:0000314"/>
    <property type="project" value="UniProtKB"/>
</dbReference>
<dbReference type="CDD" id="cd03784">
    <property type="entry name" value="GT1_Gtf-like"/>
    <property type="match status" value="1"/>
</dbReference>
<dbReference type="FunFam" id="3.40.50.2000:FF:000037">
    <property type="entry name" value="Glycosyltransferase"/>
    <property type="match status" value="1"/>
</dbReference>
<dbReference type="FunFam" id="3.40.50.2000:FF:000087">
    <property type="entry name" value="Glycosyltransferase"/>
    <property type="match status" value="1"/>
</dbReference>
<dbReference type="Gene3D" id="3.40.50.2000">
    <property type="entry name" value="Glycogen Phosphorylase B"/>
    <property type="match status" value="2"/>
</dbReference>
<dbReference type="InterPro" id="IPR050481">
    <property type="entry name" value="UDP-glycosyltransf_plant"/>
</dbReference>
<dbReference type="InterPro" id="IPR002213">
    <property type="entry name" value="UDP_glucos_trans"/>
</dbReference>
<dbReference type="InterPro" id="IPR035595">
    <property type="entry name" value="UDP_glycos_trans_CS"/>
</dbReference>
<dbReference type="PANTHER" id="PTHR48049">
    <property type="entry name" value="GLYCOSYLTRANSFERASE"/>
    <property type="match status" value="1"/>
</dbReference>
<dbReference type="PANTHER" id="PTHR48049:SF67">
    <property type="entry name" value="UDP-GLYCOSYLTRANSFERASE 79B30"/>
    <property type="match status" value="1"/>
</dbReference>
<dbReference type="Pfam" id="PF00201">
    <property type="entry name" value="UDPGT"/>
    <property type="match status" value="1"/>
</dbReference>
<dbReference type="SUPFAM" id="SSF53756">
    <property type="entry name" value="UDP-Glycosyltransferase/glycogen phosphorylase"/>
    <property type="match status" value="1"/>
</dbReference>
<dbReference type="PROSITE" id="PS00375">
    <property type="entry name" value="UDPGT"/>
    <property type="match status" value="1"/>
</dbReference>
<proteinExistence type="evidence at protein level"/>
<evidence type="ECO:0000255" key="1"/>
<evidence type="ECO:0000255" key="2">
    <source>
        <dbReference type="RuleBase" id="RU003718"/>
    </source>
</evidence>
<evidence type="ECO:0000269" key="3">
    <source>
    </source>
</evidence>
<evidence type="ECO:0000303" key="4">
    <source>
    </source>
</evidence>
<evidence type="ECO:0000303" key="5">
    <source ref="1"/>
</evidence>
<evidence type="ECO:0000305" key="6"/>
<evidence type="ECO:0000312" key="7">
    <source>
        <dbReference type="EMBL" id="PSS16444.1"/>
    </source>
</evidence>
<protein>
    <recommendedName>
        <fullName evidence="6">Cyanidin 3-O-galactoside 2''-O-xylosyltransferase FGGT1</fullName>
        <ecNumber evidence="3">2.4.2.50</ecNumber>
    </recommendedName>
    <alternativeName>
        <fullName evidence="4">Flavonoid 3-O-glycoside glycosyltransferase 1</fullName>
    </alternativeName>
    <alternativeName>
        <fullName evidence="6">UDP-xylose flavonoid O-glycosyltransferase 6B</fullName>
        <shortName evidence="5">AcUFGT6b</shortName>
    </alternativeName>
</protein>
<feature type="chain" id="PRO_0000448079" description="Cyanidin 3-O-galactoside 2''-O-xylosyltransferase FGGT1">
    <location>
        <begin position="1"/>
        <end position="457"/>
    </location>
</feature>
<feature type="sequence conflict" description="In Ref. 1; AYJ72754." evidence="6" ref="1">
    <original>F</original>
    <variation>L</variation>
    <location>
        <position position="104"/>
    </location>
</feature>
<feature type="sequence conflict" description="In Ref. 1; AYJ72754." evidence="6" ref="1">
    <original>T</original>
    <variation>P</variation>
    <location>
        <position position="165"/>
    </location>
</feature>
<feature type="sequence conflict" description="In Ref. 1; AYJ72754." evidence="6" ref="1">
    <original>L</original>
    <variation>I</variation>
    <location>
        <position position="167"/>
    </location>
</feature>
<feature type="sequence conflict" description="In Ref. 1; AYJ72754." evidence="6" ref="1">
    <original>SS</original>
    <variation>FL</variation>
    <location>
        <begin position="172"/>
        <end position="173"/>
    </location>
</feature>
<feature type="sequence conflict" description="In Ref. 1; AYJ72754." evidence="6" ref="1">
    <original>F</original>
    <variation>Y</variation>
    <location>
        <position position="227"/>
    </location>
</feature>
<feature type="sequence conflict" description="In Ref. 1; AYJ72754." evidence="6" ref="1">
    <original>E</original>
    <variation>G</variation>
    <location>
        <position position="233"/>
    </location>
</feature>
<feature type="sequence conflict" description="In Ref. 1; AYJ72754." evidence="6" ref="1">
    <original>D</original>
    <variation>A</variation>
    <location>
        <position position="264"/>
    </location>
</feature>
<sequence length="457" mass="51044">MGAPTFHIAMYPWFALGHLTPFLHLSNKLARKGHKISFLIPTKTQQKLEPFNLHPDLITFIPVTVPHVDGLPLGAETTSDVPYPLQTLLMTAMDRTEKYVEDVFLGLKVDVVFFDFTHWMPSVAKRLGIKSVNYCIISPATIGYTMSPARQLQGRELTEADLMVTPLGYPDSSIRLRTHEARAFAARRVMKFGGDTRFCDRNFISFSECDAMGFKTCREIEGPYCDFLESQFEKPVLLSGPVIPEPPTSPLEEIWAKWLGGFRDGSVIYCAFGSECTLKMNQFQELLLGLVLTGMPFLAVLKPPIGAKSVEEALPEKFETSVEGRGVVHEGWVQQQLILEHPSVGCFITHCGSGSLSEALFNKCQLVLLPNVGDQIINARMMSQNLKVGVEVEKGEEDGLFTGESVCRAVRDAMEEGSEVAKEVRDNHAKMREFLLNKDLESSYIDNFNKKLQDLLG</sequence>
<comment type="function">
    <text evidence="3">Xylosyltransferase involved in anthocyanin biosynthesis by catalyzing the xylosylation of cyanidin 3-O-galactoside to form cyanidin 3-O-[2-O-(-xylosyl)-galactoside] (PubMed:21175894). Required for the accumulation of anthocyanin in red-fleshed kiwifruit varieties (PubMed:21175894).</text>
</comment>
<comment type="catalytic activity">
    <reaction evidence="3">
        <text>cyanidin 3-O-beta-D-galactoside + UDP-alpha-D-xylose = cyanidin 3-O-[beta-D-xylosyl-(1-&gt;2)-beta-D-galactoside] + UDP + H(+)</text>
        <dbReference type="Rhea" id="RHEA:35435"/>
        <dbReference type="ChEBI" id="CHEBI:15378"/>
        <dbReference type="ChEBI" id="CHEBI:57632"/>
        <dbReference type="ChEBI" id="CHEBI:58223"/>
        <dbReference type="ChEBI" id="CHEBI:71516"/>
        <dbReference type="ChEBI" id="CHEBI:77935"/>
        <dbReference type="EC" id="2.4.2.50"/>
    </reaction>
    <physiologicalReaction direction="left-to-right" evidence="3">
        <dbReference type="Rhea" id="RHEA:35436"/>
    </physiologicalReaction>
</comment>
<comment type="pathway">
    <text evidence="6">Pigment biosynthesis; anthocyanin biosynthesis.</text>
</comment>
<comment type="tissue specificity">
    <text evidence="3">Expressed in ovaries.</text>
</comment>
<comment type="developmental stage">
    <text evidence="3">Expressed in the inner and outer pericarps of developing fruit at 20 days after flowering (DAF) (PubMed:21175894). Low expression detected at 49 DAF and gradually decreases up to 126 DAF (PubMed:21175894).</text>
</comment>
<comment type="similarity">
    <text evidence="1 2">Belongs to the UDP-glycosyltransferase family.</text>
</comment>
<comment type="sequence caution" evidence="6">
    <conflict type="erroneous gene model prediction">
        <sequence resource="EMBL-CDS" id="PSS16444"/>
    </conflict>
</comment>
<reference key="1">
    <citation type="submission" date="2018-08" db="EMBL/GenBank/DDBJ databases">
        <title>Identification and characterisation of AcUFGT6b, a xylosyltransferase involved in anthocyanin modification in red-fleshed kiwifruit (Actinidia chinensis).</title>
        <authorList>
            <person name="Yanfei L."/>
        </authorList>
    </citation>
    <scope>NUCLEOTIDE SEQUENCE [MRNA]</scope>
</reference>
<reference key="2">
    <citation type="journal article" date="2018" name="BMC Genomics">
        <title>A manually annotated Actinidia chinensis var. chinensis (kiwifruit) genome highlights the challenges associated with draft genomes and gene prediction in plants.</title>
        <authorList>
            <person name="Pilkington S.M."/>
            <person name="Crowhurst R."/>
            <person name="Hilario E."/>
            <person name="Nardozza S."/>
            <person name="Fraser L."/>
            <person name="Peng Y."/>
            <person name="Gunaseelan K."/>
            <person name="Simpson R."/>
            <person name="Tahir J."/>
            <person name="Deroles S.C."/>
            <person name="Templeton K."/>
            <person name="Luo Z."/>
            <person name="Davy M."/>
            <person name="Cheng C."/>
            <person name="McNeilage M."/>
            <person name="Scaglione D."/>
            <person name="Liu Y."/>
            <person name="Zhang Q."/>
            <person name="Datson P."/>
            <person name="De Silva N."/>
            <person name="Gardiner S.E."/>
            <person name="Bassett H."/>
            <person name="Chagne D."/>
            <person name="McCallum J."/>
            <person name="Dzierzon H."/>
            <person name="Deng C."/>
            <person name="Wang Y.Y."/>
            <person name="Barron L."/>
            <person name="Manako K."/>
            <person name="Bowen J."/>
            <person name="Foster T.M."/>
            <person name="Erridge Z.A."/>
            <person name="Tiffin H."/>
            <person name="Waite C.N."/>
            <person name="Davies K.M."/>
            <person name="Grierson E.P."/>
            <person name="Laing W.A."/>
            <person name="Kirk R."/>
            <person name="Chen X."/>
            <person name="Wood M."/>
            <person name="Montefiori M."/>
            <person name="Brummell D.A."/>
            <person name="Schwinn K.E."/>
            <person name="Catanach A."/>
            <person name="Fullerton C."/>
            <person name="Li D."/>
            <person name="Meiyalaghan S."/>
            <person name="Nieuwenhuizen N."/>
            <person name="Read N."/>
            <person name="Prakash R."/>
            <person name="Hunter D."/>
            <person name="Zhang H."/>
            <person name="McKenzie M."/>
            <person name="Knabel M."/>
            <person name="Harris A."/>
            <person name="Allan A.C."/>
            <person name="Gleave A."/>
            <person name="Chen A."/>
            <person name="Janssen B.J."/>
            <person name="Plunkett B."/>
            <person name="Ampomah-Dwamena C."/>
            <person name="Voogd C."/>
            <person name="Leif D."/>
            <person name="Lafferty D."/>
            <person name="Souleyre E.J.F."/>
            <person name="Varkonyi-Gasic E."/>
            <person name="Gambi F."/>
            <person name="Hanley J."/>
            <person name="Yao J.L."/>
            <person name="Cheung J."/>
            <person name="David K.M."/>
            <person name="Warren B."/>
            <person name="Marsh K."/>
            <person name="Snowden K.C."/>
            <person name="Lin-Wang K."/>
            <person name="Brian L."/>
            <person name="Martinez-Sanchez M."/>
            <person name="Wang M."/>
            <person name="Ileperuma N."/>
            <person name="Macnee N."/>
            <person name="Campin R."/>
            <person name="McAtee P."/>
            <person name="Drummond R.S.M."/>
            <person name="Espley R.V."/>
            <person name="Ireland H.S."/>
            <person name="Wu R."/>
            <person name="Atkinson R.G."/>
            <person name="Karunairetnam S."/>
            <person name="Bulley S."/>
            <person name="Chunkath S."/>
            <person name="Hanley Z."/>
            <person name="Storey R."/>
            <person name="Thrimawithana A.H."/>
            <person name="Thomson S."/>
            <person name="David C."/>
            <person name="Testolin R."/>
            <person name="Huang H."/>
            <person name="Hellens R.P."/>
            <person name="Schaffer R.J."/>
        </authorList>
    </citation>
    <scope>NUCLEOTIDE SEQUENCE [LARGE SCALE GENOMIC DNA]</scope>
    <source>
        <strain>cv. Red5</strain>
    </source>
</reference>
<reference key="3">
    <citation type="journal article" date="2011" name="Plant J.">
        <title>Identification and characterisation of F3GT1 and F3GGT1, two glycosyltransferases responsible for anthocyanin biosynthesis in red-fleshed kiwifruit (Actinidia chinensis).</title>
        <authorList>
            <person name="Montefiori M."/>
            <person name="Espley R.V."/>
            <person name="Stevenson D."/>
            <person name="Cooney J."/>
            <person name="Datson P.M."/>
            <person name="Saiz A."/>
            <person name="Atkinson R.G."/>
            <person name="Hellens R.P."/>
            <person name="Allan A.C."/>
        </authorList>
    </citation>
    <scope>FUNCTION</scope>
    <scope>CATALYTIC ACTIVITY</scope>
    <scope>TISSUE SPECIFICITY</scope>
    <scope>DEVELOPMENTAL STAGE</scope>
</reference>